<sequence length="318" mass="36383">MKKFTCVQDIGDLKSALAEAFEIQKDRFKYVELGRNKTLMMIFFNSSLRTRLSTQKAALNLGMNVMVLDINQGAWKLETERGVIMDGDKPEHLLEAIPVMGCYCDIIGVRSFARFEDRDFDYQETILNQFIQYSGRPVFSMEAATRHPLQSFADLITIEEYKKTARPKVVMTWAPHPRPLPQAVPNSFAEWMNATDYDFVITHPEGYELAPQFVGNAKVEYDQMKAFEGADFIYAKNWAAYTGDNYGQILSKDREWTVSDRQMAVTNNAFFMHCLPVRRNMIVTDDVIESPQSIVIPEAANREISATVVLKRLIEGLE</sequence>
<feature type="chain" id="PRO_0000113266" description="N-succinylornithine carbamoyltransferase">
    <location>
        <begin position="1"/>
        <end position="318"/>
    </location>
</feature>
<feature type="binding site" description="in other chain" evidence="1">
    <location>
        <begin position="47"/>
        <end position="50"/>
    </location>
    <ligand>
        <name>carbamoyl phosphate</name>
        <dbReference type="ChEBI" id="CHEBI:58228"/>
        <note>ligand shared between two neighboring subunits</note>
    </ligand>
</feature>
<feature type="binding site" evidence="1">
    <location>
        <position position="75"/>
    </location>
    <ligand>
        <name>carbamoyl phosphate</name>
        <dbReference type="ChEBI" id="CHEBI:58228"/>
        <note>ligand shared between two neighboring subunits</note>
    </ligand>
</feature>
<feature type="binding site" description="in other chain" evidence="1">
    <location>
        <position position="110"/>
    </location>
    <ligand>
        <name>carbamoyl phosphate</name>
        <dbReference type="ChEBI" id="CHEBI:58228"/>
        <note>ligand shared between two neighboring subunits</note>
    </ligand>
</feature>
<feature type="binding site" evidence="1">
    <location>
        <position position="142"/>
    </location>
    <ligand>
        <name>N(2)-succinyl-L-ornithine</name>
        <dbReference type="ChEBI" id="CHEBI:58514"/>
    </ligand>
</feature>
<feature type="binding site" description="in other chain" evidence="1">
    <location>
        <begin position="147"/>
        <end position="150"/>
    </location>
    <ligand>
        <name>carbamoyl phosphate</name>
        <dbReference type="ChEBI" id="CHEBI:58228"/>
        <note>ligand shared between two neighboring subunits</note>
    </ligand>
</feature>
<feature type="binding site" evidence="1">
    <location>
        <position position="176"/>
    </location>
    <ligand>
        <name>N(2)-succinyl-L-ornithine</name>
        <dbReference type="ChEBI" id="CHEBI:58514"/>
    </ligand>
</feature>
<feature type="binding site" evidence="1">
    <location>
        <position position="236"/>
    </location>
    <ligand>
        <name>N(2)-succinyl-L-ornithine</name>
        <dbReference type="ChEBI" id="CHEBI:58514"/>
    </ligand>
</feature>
<feature type="binding site" description="in other chain" evidence="1">
    <location>
        <begin position="274"/>
        <end position="275"/>
    </location>
    <ligand>
        <name>carbamoyl phosphate</name>
        <dbReference type="ChEBI" id="CHEBI:58228"/>
        <note>ligand shared between two neighboring subunits</note>
    </ligand>
</feature>
<feature type="binding site" evidence="1">
    <location>
        <position position="278"/>
    </location>
    <ligand>
        <name>N(2)-succinyl-L-ornithine</name>
        <dbReference type="ChEBI" id="CHEBI:58514"/>
    </ligand>
</feature>
<feature type="binding site" description="in other chain" evidence="1">
    <location>
        <position position="302"/>
    </location>
    <ligand>
        <name>carbamoyl phosphate</name>
        <dbReference type="ChEBI" id="CHEBI:58228"/>
        <note>ligand shared between two neighboring subunits</note>
    </ligand>
</feature>
<feature type="site" description="Key residue in conferring substrate specificity for N-succinyl-L-ornithine versus N-acetyl-L-ornithine" evidence="1">
    <location>
        <position position="90"/>
    </location>
</feature>
<comment type="function">
    <text evidence="1">Catalyzes the transfer of the carbamoyl group from carbamoyl phosphate to the delta-amino group of N(2)-succinyl-L-ornithine to produce N(2)-succinyl-L-citrulline. Is essential for arginine biosynthesis. Has no activity with either L-ornithine or L-aspartate as substrate. Also has no detectable AOTCase activity, being unable to convert N(2)-acetyl-L-ornithine to N(2)-acetyl-L-citrulline.</text>
</comment>
<comment type="catalytic activity">
    <reaction evidence="1">
        <text>N(2)-succinyl-L-ornithine + carbamoyl phosphate = N(2)-succinyl-L-citrulline + phosphate + H(+)</text>
        <dbReference type="Rhea" id="RHEA:25884"/>
        <dbReference type="ChEBI" id="CHEBI:15378"/>
        <dbReference type="ChEBI" id="CHEBI:43474"/>
        <dbReference type="ChEBI" id="CHEBI:58228"/>
        <dbReference type="ChEBI" id="CHEBI:58514"/>
        <dbReference type="ChEBI" id="CHEBI:58862"/>
        <dbReference type="EC" id="2.1.3.11"/>
    </reaction>
    <physiologicalReaction direction="left-to-right" evidence="1">
        <dbReference type="Rhea" id="RHEA:25885"/>
    </physiologicalReaction>
</comment>
<comment type="pathway">
    <text evidence="1">Amino-acid biosynthesis; L-arginine biosynthesis.</text>
</comment>
<comment type="subunit">
    <text evidence="1">Homotrimer.</text>
</comment>
<comment type="similarity">
    <text evidence="2 3">Belongs to the aspartate/ornithine carbamoyltransferase superfamily. SOTCase family.</text>
</comment>
<evidence type="ECO:0000250" key="1">
    <source>
        <dbReference type="UniProtKB" id="E1WKT5"/>
    </source>
</evidence>
<evidence type="ECO:0000255" key="2">
    <source>
        <dbReference type="HAMAP-Rule" id="MF_02235"/>
    </source>
</evidence>
<evidence type="ECO:0000305" key="3"/>
<keyword id="KW-0028">Amino-acid biosynthesis</keyword>
<keyword id="KW-0055">Arginine biosynthesis</keyword>
<keyword id="KW-1185">Reference proteome</keyword>
<keyword id="KW-0808">Transferase</keyword>
<organism>
    <name type="scientific">Bacteroides thetaiotaomicron (strain ATCC 29148 / DSM 2079 / JCM 5827 / CCUG 10774 / NCTC 10582 / VPI-5482 / E50)</name>
    <dbReference type="NCBI Taxonomy" id="226186"/>
    <lineage>
        <taxon>Bacteria</taxon>
        <taxon>Pseudomonadati</taxon>
        <taxon>Bacteroidota</taxon>
        <taxon>Bacteroidia</taxon>
        <taxon>Bacteroidales</taxon>
        <taxon>Bacteroidaceae</taxon>
        <taxon>Bacteroides</taxon>
    </lineage>
</organism>
<accession>Q8A1E9</accession>
<gene>
    <name evidence="2" type="primary">argF'</name>
    <name type="ordered locus">BT_3717</name>
</gene>
<reference key="1">
    <citation type="journal article" date="2003" name="Science">
        <title>A genomic view of the human-Bacteroides thetaiotaomicron symbiosis.</title>
        <authorList>
            <person name="Xu J."/>
            <person name="Bjursell M.K."/>
            <person name="Himrod J."/>
            <person name="Deng S."/>
            <person name="Carmichael L.K."/>
            <person name="Chiang H.C."/>
            <person name="Hooper L.V."/>
            <person name="Gordon J.I."/>
        </authorList>
    </citation>
    <scope>NUCLEOTIDE SEQUENCE [LARGE SCALE GENOMIC DNA]</scope>
    <source>
        <strain>ATCC 29148 / DSM 2079 / JCM 5827 / CCUG 10774 / NCTC 10582 / VPI-5482 / E50</strain>
    </source>
</reference>
<protein>
    <recommendedName>
        <fullName evidence="1">N-succinylornithine carbamoyltransferase</fullName>
        <ecNumber evidence="1">2.1.3.11</ecNumber>
    </recommendedName>
    <alternativeName>
        <fullName evidence="2">N-succinyl-L-ornithine transcarbamylase</fullName>
        <shortName evidence="2">SOTCase</shortName>
    </alternativeName>
</protein>
<dbReference type="EC" id="2.1.3.11" evidence="1"/>
<dbReference type="EMBL" id="AE015928">
    <property type="protein sequence ID" value="AAO78822.1"/>
    <property type="molecule type" value="Genomic_DNA"/>
</dbReference>
<dbReference type="RefSeq" id="NP_812628.1">
    <property type="nucleotide sequence ID" value="NC_004663.1"/>
</dbReference>
<dbReference type="RefSeq" id="WP_008762653.1">
    <property type="nucleotide sequence ID" value="NZ_UYXG01000004.1"/>
</dbReference>
<dbReference type="SMR" id="Q8A1E9"/>
<dbReference type="FunCoup" id="Q8A1E9">
    <property type="interactions" value="436"/>
</dbReference>
<dbReference type="STRING" id="226186.BT_3717"/>
<dbReference type="PaxDb" id="226186-BT_3717"/>
<dbReference type="EnsemblBacteria" id="AAO78822">
    <property type="protein sequence ID" value="AAO78822"/>
    <property type="gene ID" value="BT_3717"/>
</dbReference>
<dbReference type="KEGG" id="bth:BT_3717"/>
<dbReference type="PATRIC" id="fig|226186.12.peg.3778"/>
<dbReference type="eggNOG" id="COG0078">
    <property type="taxonomic scope" value="Bacteria"/>
</dbReference>
<dbReference type="HOGENOM" id="CLU_043846_3_3_10"/>
<dbReference type="InParanoid" id="Q8A1E9"/>
<dbReference type="OrthoDB" id="9802587at2"/>
<dbReference type="BioCyc" id="MetaCyc:MONOMER-14262"/>
<dbReference type="BRENDA" id="2.1.3.11">
    <property type="organism ID" value="755"/>
</dbReference>
<dbReference type="UniPathway" id="UPA00068"/>
<dbReference type="EvolutionaryTrace" id="Q8A1E9"/>
<dbReference type="Proteomes" id="UP000001414">
    <property type="component" value="Chromosome"/>
</dbReference>
<dbReference type="GO" id="GO:0016597">
    <property type="term" value="F:amino acid binding"/>
    <property type="evidence" value="ECO:0007669"/>
    <property type="project" value="InterPro"/>
</dbReference>
<dbReference type="GO" id="GO:0004585">
    <property type="term" value="F:ornithine carbamoyltransferase activity"/>
    <property type="evidence" value="ECO:0000318"/>
    <property type="project" value="GO_Central"/>
</dbReference>
<dbReference type="GO" id="GO:0042450">
    <property type="term" value="P:arginine biosynthetic process via ornithine"/>
    <property type="evidence" value="ECO:0000318"/>
    <property type="project" value="GO_Central"/>
</dbReference>
<dbReference type="GO" id="GO:0019240">
    <property type="term" value="P:citrulline biosynthetic process"/>
    <property type="evidence" value="ECO:0000318"/>
    <property type="project" value="GO_Central"/>
</dbReference>
<dbReference type="GO" id="GO:0006526">
    <property type="term" value="P:L-arginine biosynthetic process"/>
    <property type="evidence" value="ECO:0007669"/>
    <property type="project" value="UniProtKB-UniRule"/>
</dbReference>
<dbReference type="FunFam" id="3.40.50.1370:FF:000013">
    <property type="entry name" value="N-acetylornithine carbamoyltransferase"/>
    <property type="match status" value="1"/>
</dbReference>
<dbReference type="Gene3D" id="3.40.50.1370">
    <property type="entry name" value="Aspartate/ornithine carbamoyltransferase"/>
    <property type="match status" value="2"/>
</dbReference>
<dbReference type="HAMAP" id="MF_02235">
    <property type="entry name" value="SOTCase"/>
    <property type="match status" value="1"/>
</dbReference>
<dbReference type="InterPro" id="IPR043696">
    <property type="entry name" value="ArgF'-like"/>
</dbReference>
<dbReference type="InterPro" id="IPR006132">
    <property type="entry name" value="Asp/Orn_carbamoyltranf_P-bd"/>
</dbReference>
<dbReference type="InterPro" id="IPR006130">
    <property type="entry name" value="Asp/Orn_carbamoylTrfase"/>
</dbReference>
<dbReference type="InterPro" id="IPR036901">
    <property type="entry name" value="Asp/Orn_carbamoylTrfase_sf"/>
</dbReference>
<dbReference type="InterPro" id="IPR006131">
    <property type="entry name" value="Asp_carbamoyltransf_Asp/Orn-bd"/>
</dbReference>
<dbReference type="PANTHER" id="PTHR45753">
    <property type="entry name" value="ORNITHINE CARBAMOYLTRANSFERASE, MITOCHONDRIAL"/>
    <property type="match status" value="1"/>
</dbReference>
<dbReference type="PANTHER" id="PTHR45753:SF3">
    <property type="entry name" value="ORNITHINE TRANSCARBAMYLASE, MITOCHONDRIAL"/>
    <property type="match status" value="1"/>
</dbReference>
<dbReference type="Pfam" id="PF00185">
    <property type="entry name" value="OTCace"/>
    <property type="match status" value="1"/>
</dbReference>
<dbReference type="Pfam" id="PF02729">
    <property type="entry name" value="OTCace_N"/>
    <property type="match status" value="1"/>
</dbReference>
<dbReference type="PRINTS" id="PR00100">
    <property type="entry name" value="AOTCASE"/>
</dbReference>
<dbReference type="PRINTS" id="PR00101">
    <property type="entry name" value="ATCASE"/>
</dbReference>
<dbReference type="SUPFAM" id="SSF53671">
    <property type="entry name" value="Aspartate/ornithine carbamoyltransferase"/>
    <property type="match status" value="1"/>
</dbReference>
<proteinExistence type="inferred from homology"/>
<name>SOTC_BACTN</name>